<organism>
    <name type="scientific">Nitrosococcus oceani (strain ATCC 19707 / BCRC 17464 / JCM 30415 / NCIMB 11848 / C-107)</name>
    <dbReference type="NCBI Taxonomy" id="323261"/>
    <lineage>
        <taxon>Bacteria</taxon>
        <taxon>Pseudomonadati</taxon>
        <taxon>Pseudomonadota</taxon>
        <taxon>Gammaproteobacteria</taxon>
        <taxon>Chromatiales</taxon>
        <taxon>Chromatiaceae</taxon>
        <taxon>Nitrosococcus</taxon>
    </lineage>
</organism>
<proteinExistence type="inferred from homology"/>
<protein>
    <recommendedName>
        <fullName evidence="1">3-dehydroquinate synthase</fullName>
        <shortName evidence="1">DHQS</shortName>
        <ecNumber evidence="1">4.2.3.4</ecNumber>
    </recommendedName>
</protein>
<name>AROB_NITOC</name>
<keyword id="KW-0028">Amino-acid biosynthesis</keyword>
<keyword id="KW-0057">Aromatic amino acid biosynthesis</keyword>
<keyword id="KW-0170">Cobalt</keyword>
<keyword id="KW-0963">Cytoplasm</keyword>
<keyword id="KW-0456">Lyase</keyword>
<keyword id="KW-0479">Metal-binding</keyword>
<keyword id="KW-0520">NAD</keyword>
<keyword id="KW-0547">Nucleotide-binding</keyword>
<keyword id="KW-1185">Reference proteome</keyword>
<keyword id="KW-0862">Zinc</keyword>
<evidence type="ECO:0000255" key="1">
    <source>
        <dbReference type="HAMAP-Rule" id="MF_00110"/>
    </source>
</evidence>
<comment type="function">
    <text evidence="1">Catalyzes the conversion of 3-deoxy-D-arabino-heptulosonate 7-phosphate (DAHP) to dehydroquinate (DHQ).</text>
</comment>
<comment type="catalytic activity">
    <reaction evidence="1">
        <text>7-phospho-2-dehydro-3-deoxy-D-arabino-heptonate = 3-dehydroquinate + phosphate</text>
        <dbReference type="Rhea" id="RHEA:21968"/>
        <dbReference type="ChEBI" id="CHEBI:32364"/>
        <dbReference type="ChEBI" id="CHEBI:43474"/>
        <dbReference type="ChEBI" id="CHEBI:58394"/>
        <dbReference type="EC" id="4.2.3.4"/>
    </reaction>
</comment>
<comment type="cofactor">
    <cofactor evidence="1">
        <name>Co(2+)</name>
        <dbReference type="ChEBI" id="CHEBI:48828"/>
    </cofactor>
    <cofactor evidence="1">
        <name>Zn(2+)</name>
        <dbReference type="ChEBI" id="CHEBI:29105"/>
    </cofactor>
    <text evidence="1">Binds 1 divalent metal cation per subunit. Can use either Co(2+) or Zn(2+).</text>
</comment>
<comment type="cofactor">
    <cofactor evidence="1">
        <name>NAD(+)</name>
        <dbReference type="ChEBI" id="CHEBI:57540"/>
    </cofactor>
</comment>
<comment type="pathway">
    <text evidence="1">Metabolic intermediate biosynthesis; chorismate biosynthesis; chorismate from D-erythrose 4-phosphate and phosphoenolpyruvate: step 2/7.</text>
</comment>
<comment type="subcellular location">
    <subcellularLocation>
        <location evidence="1">Cytoplasm</location>
    </subcellularLocation>
</comment>
<comment type="similarity">
    <text evidence="1">Belongs to the sugar phosphate cyclases superfamily. Dehydroquinate synthase family.</text>
</comment>
<feature type="chain" id="PRO_0000231102" description="3-dehydroquinate synthase">
    <location>
        <begin position="1"/>
        <end position="359"/>
    </location>
</feature>
<feature type="binding site" evidence="1">
    <location>
        <begin position="69"/>
        <end position="74"/>
    </location>
    <ligand>
        <name>NAD(+)</name>
        <dbReference type="ChEBI" id="CHEBI:57540"/>
    </ligand>
</feature>
<feature type="binding site" evidence="1">
    <location>
        <begin position="103"/>
        <end position="107"/>
    </location>
    <ligand>
        <name>NAD(+)</name>
        <dbReference type="ChEBI" id="CHEBI:57540"/>
    </ligand>
</feature>
<feature type="binding site" evidence="1">
    <location>
        <begin position="127"/>
        <end position="128"/>
    </location>
    <ligand>
        <name>NAD(+)</name>
        <dbReference type="ChEBI" id="CHEBI:57540"/>
    </ligand>
</feature>
<feature type="binding site" evidence="1">
    <location>
        <position position="140"/>
    </location>
    <ligand>
        <name>NAD(+)</name>
        <dbReference type="ChEBI" id="CHEBI:57540"/>
    </ligand>
</feature>
<feature type="binding site" evidence="1">
    <location>
        <position position="149"/>
    </location>
    <ligand>
        <name>NAD(+)</name>
        <dbReference type="ChEBI" id="CHEBI:57540"/>
    </ligand>
</feature>
<feature type="binding site" evidence="1">
    <location>
        <begin position="167"/>
        <end position="170"/>
    </location>
    <ligand>
        <name>NAD(+)</name>
        <dbReference type="ChEBI" id="CHEBI:57540"/>
    </ligand>
</feature>
<feature type="binding site" evidence="1">
    <location>
        <position position="182"/>
    </location>
    <ligand>
        <name>Zn(2+)</name>
        <dbReference type="ChEBI" id="CHEBI:29105"/>
    </ligand>
</feature>
<feature type="binding site" evidence="1">
    <location>
        <position position="245"/>
    </location>
    <ligand>
        <name>Zn(2+)</name>
        <dbReference type="ChEBI" id="CHEBI:29105"/>
    </ligand>
</feature>
<feature type="binding site" evidence="1">
    <location>
        <position position="262"/>
    </location>
    <ligand>
        <name>Zn(2+)</name>
        <dbReference type="ChEBI" id="CHEBI:29105"/>
    </ligand>
</feature>
<reference key="1">
    <citation type="journal article" date="2006" name="Appl. Environ. Microbiol.">
        <title>Complete genome sequence of the marine, chemolithoautotrophic, ammonia-oxidizing bacterium Nitrosococcus oceani ATCC 19707.</title>
        <authorList>
            <person name="Klotz M.G."/>
            <person name="Arp D.J."/>
            <person name="Chain P.S.G."/>
            <person name="El-Sheikh A.F."/>
            <person name="Hauser L.J."/>
            <person name="Hommes N.G."/>
            <person name="Larimer F.W."/>
            <person name="Malfatti S.A."/>
            <person name="Norton J.M."/>
            <person name="Poret-Peterson A.T."/>
            <person name="Vergez L.M."/>
            <person name="Ward B.B."/>
        </authorList>
    </citation>
    <scope>NUCLEOTIDE SEQUENCE [LARGE SCALE GENOMIC DNA]</scope>
    <source>
        <strain>ATCC 19707 / BCRC 17464 / JCM 30415 / NCIMB 11848 / C-107</strain>
    </source>
</reference>
<dbReference type="EC" id="4.2.3.4" evidence="1"/>
<dbReference type="EMBL" id="CP000127">
    <property type="protein sequence ID" value="ABA56783.1"/>
    <property type="molecule type" value="Genomic_DNA"/>
</dbReference>
<dbReference type="RefSeq" id="WP_011330276.1">
    <property type="nucleotide sequence ID" value="NC_007484.1"/>
</dbReference>
<dbReference type="SMR" id="Q3JEG3"/>
<dbReference type="FunCoup" id="Q3JEG3">
    <property type="interactions" value="543"/>
</dbReference>
<dbReference type="STRING" id="323261.Noc_0253"/>
<dbReference type="KEGG" id="noc:Noc_0253"/>
<dbReference type="eggNOG" id="COG0337">
    <property type="taxonomic scope" value="Bacteria"/>
</dbReference>
<dbReference type="HOGENOM" id="CLU_001201_0_2_6"/>
<dbReference type="InParanoid" id="Q3JEG3"/>
<dbReference type="UniPathway" id="UPA00053">
    <property type="reaction ID" value="UER00085"/>
</dbReference>
<dbReference type="Proteomes" id="UP000006838">
    <property type="component" value="Chromosome"/>
</dbReference>
<dbReference type="GO" id="GO:0005737">
    <property type="term" value="C:cytoplasm"/>
    <property type="evidence" value="ECO:0007669"/>
    <property type="project" value="UniProtKB-SubCell"/>
</dbReference>
<dbReference type="GO" id="GO:0003856">
    <property type="term" value="F:3-dehydroquinate synthase activity"/>
    <property type="evidence" value="ECO:0007669"/>
    <property type="project" value="UniProtKB-UniRule"/>
</dbReference>
<dbReference type="GO" id="GO:0046872">
    <property type="term" value="F:metal ion binding"/>
    <property type="evidence" value="ECO:0007669"/>
    <property type="project" value="UniProtKB-KW"/>
</dbReference>
<dbReference type="GO" id="GO:0000166">
    <property type="term" value="F:nucleotide binding"/>
    <property type="evidence" value="ECO:0007669"/>
    <property type="project" value="UniProtKB-KW"/>
</dbReference>
<dbReference type="GO" id="GO:0008652">
    <property type="term" value="P:amino acid biosynthetic process"/>
    <property type="evidence" value="ECO:0007669"/>
    <property type="project" value="UniProtKB-KW"/>
</dbReference>
<dbReference type="GO" id="GO:0009073">
    <property type="term" value="P:aromatic amino acid family biosynthetic process"/>
    <property type="evidence" value="ECO:0007669"/>
    <property type="project" value="UniProtKB-KW"/>
</dbReference>
<dbReference type="GO" id="GO:0009423">
    <property type="term" value="P:chorismate biosynthetic process"/>
    <property type="evidence" value="ECO:0007669"/>
    <property type="project" value="UniProtKB-UniRule"/>
</dbReference>
<dbReference type="CDD" id="cd08195">
    <property type="entry name" value="DHQS"/>
    <property type="match status" value="1"/>
</dbReference>
<dbReference type="FunFam" id="1.20.1090.10:FF:000002">
    <property type="entry name" value="3-dehydroquinate synthase"/>
    <property type="match status" value="1"/>
</dbReference>
<dbReference type="FunFam" id="3.40.50.1970:FF:000001">
    <property type="entry name" value="3-dehydroquinate synthase"/>
    <property type="match status" value="1"/>
</dbReference>
<dbReference type="Gene3D" id="3.40.50.1970">
    <property type="match status" value="1"/>
</dbReference>
<dbReference type="Gene3D" id="1.20.1090.10">
    <property type="entry name" value="Dehydroquinate synthase-like - alpha domain"/>
    <property type="match status" value="1"/>
</dbReference>
<dbReference type="HAMAP" id="MF_00110">
    <property type="entry name" value="DHQ_synthase"/>
    <property type="match status" value="1"/>
</dbReference>
<dbReference type="InterPro" id="IPR050071">
    <property type="entry name" value="Dehydroquinate_synthase"/>
</dbReference>
<dbReference type="InterPro" id="IPR016037">
    <property type="entry name" value="DHQ_synth_AroB"/>
</dbReference>
<dbReference type="InterPro" id="IPR030963">
    <property type="entry name" value="DHQ_synth_fam"/>
</dbReference>
<dbReference type="InterPro" id="IPR030960">
    <property type="entry name" value="DHQS/DOIS_N"/>
</dbReference>
<dbReference type="InterPro" id="IPR056179">
    <property type="entry name" value="DHQS_C"/>
</dbReference>
<dbReference type="NCBIfam" id="TIGR01357">
    <property type="entry name" value="aroB"/>
    <property type="match status" value="1"/>
</dbReference>
<dbReference type="PANTHER" id="PTHR43622">
    <property type="entry name" value="3-DEHYDROQUINATE SYNTHASE"/>
    <property type="match status" value="1"/>
</dbReference>
<dbReference type="PANTHER" id="PTHR43622:SF7">
    <property type="entry name" value="3-DEHYDROQUINATE SYNTHASE, CHLOROPLASTIC"/>
    <property type="match status" value="1"/>
</dbReference>
<dbReference type="Pfam" id="PF01761">
    <property type="entry name" value="DHQ_synthase"/>
    <property type="match status" value="1"/>
</dbReference>
<dbReference type="Pfam" id="PF24621">
    <property type="entry name" value="DHQS_C"/>
    <property type="match status" value="1"/>
</dbReference>
<dbReference type="PIRSF" id="PIRSF001455">
    <property type="entry name" value="DHQ_synth"/>
    <property type="match status" value="1"/>
</dbReference>
<dbReference type="SUPFAM" id="SSF56796">
    <property type="entry name" value="Dehydroquinate synthase-like"/>
    <property type="match status" value="1"/>
</dbReference>
<accession>Q3JEG3</accession>
<sequence>MITVQVDLQERSYPIYIGSGLLKQNSLLAKHIVGSEVMVVTNETVAPLYLDTLLKGLKDYRCAEIILPDGEQHKTLAVLQQIFDDLLKVPFSRHCTVIALGGGVIGDMAGFAAACYQRGVAYIQVPTTLLAQVDSSVGGKTAVNHPLGKNMIGAFYQPRCVLADTDTLDTLDERQLRAGLAEVIKYGLIRDIDFFTWLEEHASEVLAREPSALIHAIERSCRNKAEIVAADERESGVRAILNLGHTFGHAIETGLGYGAWLHGEAVAAGMAMAADLSQRLGWLSATEVGRVLNLLERAGLPRHSPEAIHKARFLELMAVDKKVIDGCLRLVLLRQLGQAVVTDGFDSDLLEATIDKATV</sequence>
<gene>
    <name evidence="1" type="primary">aroB</name>
    <name type="ordered locus">Noc_0253</name>
</gene>